<feature type="signal peptide" evidence="4">
    <location>
        <begin position="1"/>
        <end position="21"/>
    </location>
</feature>
<feature type="chain" id="PRO_0000016782" description="Fibroblast growth factor receptor 1">
    <location>
        <begin position="22"/>
        <end position="822"/>
    </location>
</feature>
<feature type="topological domain" description="Extracellular" evidence="4">
    <location>
        <begin position="22"/>
        <end position="376"/>
    </location>
</feature>
<feature type="transmembrane region" description="Helical" evidence="4">
    <location>
        <begin position="377"/>
        <end position="397"/>
    </location>
</feature>
<feature type="topological domain" description="Cytoplasmic" evidence="4">
    <location>
        <begin position="398"/>
        <end position="822"/>
    </location>
</feature>
<feature type="domain" description="Ig-like C2-type 1">
    <location>
        <begin position="25"/>
        <end position="119"/>
    </location>
</feature>
<feature type="domain" description="Ig-like C2-type 2">
    <location>
        <begin position="158"/>
        <end position="246"/>
    </location>
</feature>
<feature type="domain" description="Ig-like C2-type 3">
    <location>
        <begin position="255"/>
        <end position="357"/>
    </location>
</feature>
<feature type="domain" description="Protein kinase" evidence="6">
    <location>
        <begin position="478"/>
        <end position="767"/>
    </location>
</feature>
<feature type="region of interest" description="Disordered" evidence="8">
    <location>
        <begin position="120"/>
        <end position="162"/>
    </location>
</feature>
<feature type="region of interest" description="Heparin-binding">
    <location>
        <begin position="160"/>
        <end position="177"/>
    </location>
</feature>
<feature type="region of interest" description="Disordered" evidence="8">
    <location>
        <begin position="770"/>
        <end position="822"/>
    </location>
</feature>
<feature type="compositionally biased region" description="Acidic residues" evidence="8">
    <location>
        <begin position="125"/>
        <end position="135"/>
    </location>
</feature>
<feature type="compositionally biased region" description="Basic and acidic residues" evidence="8">
    <location>
        <begin position="136"/>
        <end position="145"/>
    </location>
</feature>
<feature type="compositionally biased region" description="Polar residues" evidence="8">
    <location>
        <begin position="776"/>
        <end position="792"/>
    </location>
</feature>
<feature type="active site" description="Proton acceptor" evidence="6 7">
    <location>
        <position position="623"/>
    </location>
</feature>
<feature type="binding site" evidence="6">
    <location>
        <begin position="484"/>
        <end position="490"/>
    </location>
    <ligand>
        <name>ATP</name>
        <dbReference type="ChEBI" id="CHEBI:30616"/>
    </ligand>
</feature>
<feature type="binding site" evidence="6">
    <location>
        <position position="514"/>
    </location>
    <ligand>
        <name>ATP</name>
        <dbReference type="ChEBI" id="CHEBI:30616"/>
    </ligand>
</feature>
<feature type="binding site" evidence="6">
    <location>
        <begin position="562"/>
        <end position="564"/>
    </location>
    <ligand>
        <name>ATP</name>
        <dbReference type="ChEBI" id="CHEBI:30616"/>
    </ligand>
</feature>
<feature type="binding site" evidence="6">
    <location>
        <position position="568"/>
    </location>
    <ligand>
        <name>ATP</name>
        <dbReference type="ChEBI" id="CHEBI:30616"/>
    </ligand>
</feature>
<feature type="binding site" evidence="6">
    <location>
        <position position="627"/>
    </location>
    <ligand>
        <name>ATP</name>
        <dbReference type="ChEBI" id="CHEBI:30616"/>
    </ligand>
</feature>
<feature type="binding site" evidence="6">
    <location>
        <position position="641"/>
    </location>
    <ligand>
        <name>ATP</name>
        <dbReference type="ChEBI" id="CHEBI:30616"/>
    </ligand>
</feature>
<feature type="site" description="Mediates interaction with PLCG1 and SHB" evidence="1">
    <location>
        <position position="766"/>
    </location>
</feature>
<feature type="modified residue" description="Phosphotyrosine; by autocatalysis" evidence="2">
    <location>
        <position position="463"/>
    </location>
</feature>
<feature type="modified residue" description="Phosphotyrosine; by autocatalysis" evidence="2">
    <location>
        <position position="583"/>
    </location>
</feature>
<feature type="modified residue" description="Phosphotyrosine; by autocatalysis" evidence="2">
    <location>
        <position position="585"/>
    </location>
</feature>
<feature type="modified residue" description="Phosphotyrosine; by autocatalysis" evidence="2">
    <location>
        <position position="653"/>
    </location>
</feature>
<feature type="modified residue" description="Phosphotyrosine; by autocatalysis" evidence="2">
    <location>
        <position position="654"/>
    </location>
</feature>
<feature type="modified residue" description="Phosphotyrosine; by autocatalysis" evidence="2">
    <location>
        <position position="730"/>
    </location>
</feature>
<feature type="modified residue" description="Phosphotyrosine; by autocatalysis" evidence="2">
    <location>
        <position position="766"/>
    </location>
</feature>
<feature type="glycosylation site" description="N-linked (GlcNAc...) asparagine" evidence="4">
    <location>
        <position position="77"/>
    </location>
</feature>
<feature type="glycosylation site" description="N-linked (GlcNAc...) asparagine" evidence="4">
    <location>
        <position position="117"/>
    </location>
</feature>
<feature type="glycosylation site" description="N-linked (GlcNAc...) asparagine" evidence="4">
    <location>
        <position position="227"/>
    </location>
</feature>
<feature type="glycosylation site" description="N-linked (GlcNAc...) asparagine" evidence="4">
    <location>
        <position position="240"/>
    </location>
</feature>
<feature type="glycosylation site" description="N-linked (GlcNAc...) asparagine" evidence="4">
    <location>
        <position position="264"/>
    </location>
</feature>
<feature type="glycosylation site" description="N-linked (GlcNAc...) asparagine" evidence="4">
    <location>
        <position position="296"/>
    </location>
</feature>
<feature type="glycosylation site" description="N-linked (GlcNAc...) asparagine" evidence="4">
    <location>
        <position position="317"/>
    </location>
</feature>
<feature type="glycosylation site" description="N-linked (GlcNAc...) asparagine" evidence="4">
    <location>
        <position position="330"/>
    </location>
</feature>
<feature type="disulfide bond" evidence="5">
    <location>
        <begin position="55"/>
        <end position="101"/>
    </location>
</feature>
<feature type="disulfide bond" evidence="5">
    <location>
        <begin position="178"/>
        <end position="230"/>
    </location>
</feature>
<feature type="disulfide bond" evidence="5">
    <location>
        <begin position="277"/>
        <end position="341"/>
    </location>
</feature>
<reference key="1">
    <citation type="journal article" date="1993" name="Biochim. Biophys. Acta">
        <title>The structure and expression of the FGF receptor-1 mRNA isoforms in rat tissues.</title>
        <authorList>
            <person name="Yazaki N."/>
            <person name="Hiroko F."/>
            <person name="Mitsuhiro O."/>
            <person name="Toshisuke K."/>
            <person name="Nobuyuki I."/>
        </authorList>
    </citation>
    <scope>NUCLEOTIDE SEQUENCE [MRNA]</scope>
</reference>
<reference key="2">
    <citation type="journal article" date="2004" name="J. Biol. Chem.">
        <title>90-kDa ribosomal S6 kinase is a direct target for the nuclear fibroblast growth factor receptor 1 (FGFR1): role in FGFR1 signaling.</title>
        <authorList>
            <person name="Hu Y."/>
            <person name="Fang X."/>
            <person name="Dunham S.M."/>
            <person name="Prada C."/>
            <person name="Stachowiak E.K."/>
            <person name="Stachowiak M.K."/>
        </authorList>
    </citation>
    <scope>INTERACTION WITH RPS6KA1</scope>
    <scope>SUBCELLULAR LOCATION</scope>
</reference>
<reference key="3">
    <citation type="journal article" date="2007" name="J. Clin. Invest.">
        <title>The parathyroid is a target organ for FGF23 in rats.</title>
        <authorList>
            <person name="Ben-Dov I.Z."/>
            <person name="Galitzer H."/>
            <person name="Lavi-Moshayoff V."/>
            <person name="Goetz R."/>
            <person name="Kuro-o M."/>
            <person name="Mohammadi M."/>
            <person name="Sirkis R."/>
            <person name="Naveh-Many T."/>
            <person name="Silver J."/>
        </authorList>
    </citation>
    <scope>TISSUE SPECIFICITY</scope>
</reference>
<reference key="4">
    <citation type="journal article" date="2012" name="Nat. Commun.">
        <title>Quantitative maps of protein phosphorylation sites across 14 different rat organs and tissues.</title>
        <authorList>
            <person name="Lundby A."/>
            <person name="Secher A."/>
            <person name="Lage K."/>
            <person name="Nordsborg N.B."/>
            <person name="Dmytriyev A."/>
            <person name="Lundby C."/>
            <person name="Olsen J.V."/>
        </authorList>
    </citation>
    <scope>IDENTIFICATION BY MASS SPECTROMETRY [LARGE SCALE ANALYSIS]</scope>
</reference>
<gene>
    <name type="primary">Fgfr1</name>
    <name type="synonym">Flg</name>
</gene>
<dbReference type="EC" id="2.7.10.1" evidence="2"/>
<dbReference type="EMBL" id="D12498">
    <property type="protein sequence ID" value="BAA02059.1"/>
    <property type="molecule type" value="mRNA"/>
</dbReference>
<dbReference type="PIR" id="S29840">
    <property type="entry name" value="S29840"/>
</dbReference>
<dbReference type="RefSeq" id="NP_077060.1">
    <property type="nucleotide sequence ID" value="NM_024146.1"/>
</dbReference>
<dbReference type="BMRB" id="Q04589"/>
<dbReference type="SMR" id="Q04589"/>
<dbReference type="BioGRID" id="249399">
    <property type="interactions" value="4"/>
</dbReference>
<dbReference type="CORUM" id="Q04589"/>
<dbReference type="FunCoup" id="Q04589">
    <property type="interactions" value="1535"/>
</dbReference>
<dbReference type="IntAct" id="Q04589">
    <property type="interactions" value="3"/>
</dbReference>
<dbReference type="MINT" id="Q04589"/>
<dbReference type="STRING" id="10116.ENSRNOP00000043459"/>
<dbReference type="ChEMBL" id="CHEMBL4523276"/>
<dbReference type="GlyCosmos" id="Q04589">
    <property type="glycosylation" value="8 sites, No reported glycans"/>
</dbReference>
<dbReference type="GlyGen" id="Q04589">
    <property type="glycosylation" value="9 sites"/>
</dbReference>
<dbReference type="iPTMnet" id="Q04589"/>
<dbReference type="PaxDb" id="10116-ENSRNOP00000036885"/>
<dbReference type="GeneID" id="79114"/>
<dbReference type="KEGG" id="rno:79114"/>
<dbReference type="UCSC" id="RGD:620713">
    <property type="organism name" value="rat"/>
</dbReference>
<dbReference type="AGR" id="RGD:620713"/>
<dbReference type="CTD" id="2260"/>
<dbReference type="RGD" id="620713">
    <property type="gene designation" value="Fgfr1"/>
</dbReference>
<dbReference type="eggNOG" id="KOG0200">
    <property type="taxonomic scope" value="Eukaryota"/>
</dbReference>
<dbReference type="InParanoid" id="Q04589"/>
<dbReference type="OrthoDB" id="5984265at2759"/>
<dbReference type="PhylomeDB" id="Q04589"/>
<dbReference type="BRENDA" id="2.7.10.1">
    <property type="organism ID" value="5301"/>
</dbReference>
<dbReference type="Reactome" id="R-RNO-109704">
    <property type="pathway name" value="PI3K Cascade"/>
</dbReference>
<dbReference type="Reactome" id="R-RNO-1257604">
    <property type="pathway name" value="PIP3 activates AKT signaling"/>
</dbReference>
<dbReference type="Reactome" id="R-RNO-190370">
    <property type="pathway name" value="FGFR1b ligand binding and activation"/>
</dbReference>
<dbReference type="Reactome" id="R-RNO-190373">
    <property type="pathway name" value="FGFR1c ligand binding and activation"/>
</dbReference>
<dbReference type="Reactome" id="R-RNO-190374">
    <property type="pathway name" value="FGFR1c and Klotho ligand binding and activation"/>
</dbReference>
<dbReference type="Reactome" id="R-RNO-445144">
    <property type="pathway name" value="Signal transduction by L1"/>
</dbReference>
<dbReference type="Reactome" id="R-RNO-5654219">
    <property type="pathway name" value="Phospholipase C-mediated cascade: FGFR1"/>
</dbReference>
<dbReference type="Reactome" id="R-RNO-5654687">
    <property type="pathway name" value="Downstream signaling of activated FGFR1"/>
</dbReference>
<dbReference type="Reactome" id="R-RNO-5654688">
    <property type="pathway name" value="SHC-mediated cascade:FGFR1"/>
</dbReference>
<dbReference type="Reactome" id="R-RNO-5654689">
    <property type="pathway name" value="PI-3K cascade:FGFR1"/>
</dbReference>
<dbReference type="Reactome" id="R-RNO-5654693">
    <property type="pathway name" value="FRS-mediated FGFR1 signaling"/>
</dbReference>
<dbReference type="Reactome" id="R-RNO-5654726">
    <property type="pathway name" value="Negative regulation of FGFR1 signaling"/>
</dbReference>
<dbReference type="Reactome" id="R-RNO-5673001">
    <property type="pathway name" value="RAF/MAP kinase cascade"/>
</dbReference>
<dbReference type="Reactome" id="R-RNO-6811558">
    <property type="pathway name" value="PI5P, PP2A and IER3 Regulate PI3K/AKT Signaling"/>
</dbReference>
<dbReference type="PRO" id="PR:Q04589"/>
<dbReference type="Proteomes" id="UP000002494">
    <property type="component" value="Unplaced"/>
</dbReference>
<dbReference type="GO" id="GO:0031410">
    <property type="term" value="C:cytoplasmic vesicle"/>
    <property type="evidence" value="ECO:0007669"/>
    <property type="project" value="UniProtKB-KW"/>
</dbReference>
<dbReference type="GO" id="GO:0005829">
    <property type="term" value="C:cytosol"/>
    <property type="evidence" value="ECO:0007669"/>
    <property type="project" value="UniProtKB-SubCell"/>
</dbReference>
<dbReference type="GO" id="GO:0098978">
    <property type="term" value="C:glutamatergic synapse"/>
    <property type="evidence" value="ECO:0000266"/>
    <property type="project" value="RGD"/>
</dbReference>
<dbReference type="GO" id="GO:0005634">
    <property type="term" value="C:nucleus"/>
    <property type="evidence" value="ECO:0007669"/>
    <property type="project" value="UniProtKB-SubCell"/>
</dbReference>
<dbReference type="GO" id="GO:0048471">
    <property type="term" value="C:perinuclear region of cytoplasm"/>
    <property type="evidence" value="ECO:0000314"/>
    <property type="project" value="RGD"/>
</dbReference>
<dbReference type="GO" id="GO:0005886">
    <property type="term" value="C:plasma membrane"/>
    <property type="evidence" value="ECO:0000250"/>
    <property type="project" value="UniProtKB"/>
</dbReference>
<dbReference type="GO" id="GO:0098794">
    <property type="term" value="C:postsynapse"/>
    <property type="evidence" value="ECO:0000266"/>
    <property type="project" value="RGD"/>
</dbReference>
<dbReference type="GO" id="GO:0043235">
    <property type="term" value="C:receptor complex"/>
    <property type="evidence" value="ECO:0000266"/>
    <property type="project" value="RGD"/>
</dbReference>
<dbReference type="GO" id="GO:0005524">
    <property type="term" value="F:ATP binding"/>
    <property type="evidence" value="ECO:0007669"/>
    <property type="project" value="UniProtKB-KW"/>
</dbReference>
<dbReference type="GO" id="GO:0050839">
    <property type="term" value="F:cell adhesion molecule binding"/>
    <property type="evidence" value="ECO:0000353"/>
    <property type="project" value="RGD"/>
</dbReference>
<dbReference type="GO" id="GO:0017134">
    <property type="term" value="F:fibroblast growth factor binding"/>
    <property type="evidence" value="ECO:0000250"/>
    <property type="project" value="UniProtKB"/>
</dbReference>
<dbReference type="GO" id="GO:0005007">
    <property type="term" value="F:fibroblast growth factor receptor activity"/>
    <property type="evidence" value="ECO:0000250"/>
    <property type="project" value="UniProtKB"/>
</dbReference>
<dbReference type="GO" id="GO:0008201">
    <property type="term" value="F:heparin binding"/>
    <property type="evidence" value="ECO:0000250"/>
    <property type="project" value="UniProtKB"/>
</dbReference>
<dbReference type="GO" id="GO:0042802">
    <property type="term" value="F:identical protein binding"/>
    <property type="evidence" value="ECO:0000266"/>
    <property type="project" value="RGD"/>
</dbReference>
<dbReference type="GO" id="GO:0042803">
    <property type="term" value="F:protein homodimerization activity"/>
    <property type="evidence" value="ECO:0000266"/>
    <property type="project" value="RGD"/>
</dbReference>
<dbReference type="GO" id="GO:0004713">
    <property type="term" value="F:protein tyrosine kinase activity"/>
    <property type="evidence" value="ECO:0000266"/>
    <property type="project" value="RGD"/>
</dbReference>
<dbReference type="GO" id="GO:0044877">
    <property type="term" value="F:protein-containing complex binding"/>
    <property type="evidence" value="ECO:0000353"/>
    <property type="project" value="RGD"/>
</dbReference>
<dbReference type="GO" id="GO:0090722">
    <property type="term" value="F:receptor-receptor interaction"/>
    <property type="evidence" value="ECO:0000266"/>
    <property type="project" value="RGD"/>
</dbReference>
<dbReference type="GO" id="GO:0042169">
    <property type="term" value="F:SH2 domain binding"/>
    <property type="evidence" value="ECO:0000266"/>
    <property type="project" value="RGD"/>
</dbReference>
<dbReference type="GO" id="GO:0005102">
    <property type="term" value="F:signaling receptor binding"/>
    <property type="evidence" value="ECO:0000353"/>
    <property type="project" value="RGD"/>
</dbReference>
<dbReference type="GO" id="GO:0001525">
    <property type="term" value="P:angiogenesis"/>
    <property type="evidence" value="ECO:0000266"/>
    <property type="project" value="RGD"/>
</dbReference>
<dbReference type="GO" id="GO:0060117">
    <property type="term" value="P:auditory receptor cell development"/>
    <property type="evidence" value="ECO:0000266"/>
    <property type="project" value="RGD"/>
</dbReference>
<dbReference type="GO" id="GO:0048514">
    <property type="term" value="P:blood vessel morphogenesis"/>
    <property type="evidence" value="ECO:0000266"/>
    <property type="project" value="RGD"/>
</dbReference>
<dbReference type="GO" id="GO:0007420">
    <property type="term" value="P:brain development"/>
    <property type="evidence" value="ECO:0000266"/>
    <property type="project" value="RGD"/>
</dbReference>
<dbReference type="GO" id="GO:0060445">
    <property type="term" value="P:branching involved in salivary gland morphogenesis"/>
    <property type="evidence" value="ECO:0000266"/>
    <property type="project" value="RGD"/>
</dbReference>
<dbReference type="GO" id="GO:0055074">
    <property type="term" value="P:calcium ion homeostasis"/>
    <property type="evidence" value="ECO:0000266"/>
    <property type="project" value="RGD"/>
</dbReference>
<dbReference type="GO" id="GO:0060038">
    <property type="term" value="P:cardiac muscle cell proliferation"/>
    <property type="evidence" value="ECO:0000266"/>
    <property type="project" value="RGD"/>
</dbReference>
<dbReference type="GO" id="GO:0048469">
    <property type="term" value="P:cell maturation"/>
    <property type="evidence" value="ECO:0000266"/>
    <property type="project" value="RGD"/>
</dbReference>
<dbReference type="GO" id="GO:0008283">
    <property type="term" value="P:cell population proliferation"/>
    <property type="evidence" value="ECO:0000266"/>
    <property type="project" value="RGD"/>
</dbReference>
<dbReference type="GO" id="GO:0030031">
    <property type="term" value="P:cell projection assembly"/>
    <property type="evidence" value="ECO:0000266"/>
    <property type="project" value="RGD"/>
</dbReference>
<dbReference type="GO" id="GO:0044344">
    <property type="term" value="P:cellular response to fibroblast growth factor stimulus"/>
    <property type="evidence" value="ECO:0000266"/>
    <property type="project" value="RGD"/>
</dbReference>
<dbReference type="GO" id="GO:0071420">
    <property type="term" value="P:cellular response to histamine"/>
    <property type="evidence" value="ECO:0000270"/>
    <property type="project" value="RGD"/>
</dbReference>
<dbReference type="GO" id="GO:0071222">
    <property type="term" value="P:cellular response to lipopolysaccharide"/>
    <property type="evidence" value="ECO:0000270"/>
    <property type="project" value="RGD"/>
</dbReference>
<dbReference type="GO" id="GO:1990090">
    <property type="term" value="P:cellular response to nerve growth factor stimulus"/>
    <property type="evidence" value="ECO:0000270"/>
    <property type="project" value="RGD"/>
</dbReference>
<dbReference type="GO" id="GO:0071529">
    <property type="term" value="P:cementum mineralization"/>
    <property type="evidence" value="ECO:0000266"/>
    <property type="project" value="RGD"/>
</dbReference>
<dbReference type="GO" id="GO:0021954">
    <property type="term" value="P:central nervous system neuron development"/>
    <property type="evidence" value="ECO:0000315"/>
    <property type="project" value="RGD"/>
</dbReference>
<dbReference type="GO" id="GO:0002062">
    <property type="term" value="P:chondrocyte differentiation"/>
    <property type="evidence" value="ECO:0000266"/>
    <property type="project" value="RGD"/>
</dbReference>
<dbReference type="GO" id="GO:0071344">
    <property type="term" value="P:diphosphate metabolic process"/>
    <property type="evidence" value="ECO:0000266"/>
    <property type="project" value="RGD"/>
</dbReference>
<dbReference type="GO" id="GO:0043583">
    <property type="term" value="P:ear development"/>
    <property type="evidence" value="ECO:0000266"/>
    <property type="project" value="RGD"/>
</dbReference>
<dbReference type="GO" id="GO:0030326">
    <property type="term" value="P:embryonic limb morphogenesis"/>
    <property type="evidence" value="ECO:0000266"/>
    <property type="project" value="RGD"/>
</dbReference>
<dbReference type="GO" id="GO:0001837">
    <property type="term" value="P:epithelial to mesenchymal transition"/>
    <property type="evidence" value="ECO:0000266"/>
    <property type="project" value="RGD"/>
</dbReference>
<dbReference type="GO" id="GO:0007565">
    <property type="term" value="P:female pregnancy"/>
    <property type="evidence" value="ECO:0000270"/>
    <property type="project" value="RGD"/>
</dbReference>
<dbReference type="GO" id="GO:0008543">
    <property type="term" value="P:fibroblast growth factor receptor signaling pathway"/>
    <property type="evidence" value="ECO:0000250"/>
    <property type="project" value="UniProtKB"/>
</dbReference>
<dbReference type="GO" id="GO:0035607">
    <property type="term" value="P:fibroblast growth factor receptor signaling pathway involved in orbitofrontal cortex development"/>
    <property type="evidence" value="ECO:0000266"/>
    <property type="project" value="RGD"/>
</dbReference>
<dbReference type="GO" id="GO:0010467">
    <property type="term" value="P:gene expression"/>
    <property type="evidence" value="ECO:0000266"/>
    <property type="project" value="RGD"/>
</dbReference>
<dbReference type="GO" id="GO:0048699">
    <property type="term" value="P:generation of neurons"/>
    <property type="evidence" value="ECO:0000266"/>
    <property type="project" value="RGD"/>
</dbReference>
<dbReference type="GO" id="GO:0001701">
    <property type="term" value="P:in utero embryonic development"/>
    <property type="evidence" value="ECO:0000266"/>
    <property type="project" value="RGD"/>
</dbReference>
<dbReference type="GO" id="GO:0042472">
    <property type="term" value="P:inner ear morphogenesis"/>
    <property type="evidence" value="ECO:0000266"/>
    <property type="project" value="RGD"/>
</dbReference>
<dbReference type="GO" id="GO:0030324">
    <property type="term" value="P:lung development"/>
    <property type="evidence" value="ECO:0000266"/>
    <property type="project" value="RGD"/>
</dbReference>
<dbReference type="GO" id="GO:0060484">
    <property type="term" value="P:lung-associated mesenchyme development"/>
    <property type="evidence" value="ECO:0000266"/>
    <property type="project" value="RGD"/>
</dbReference>
<dbReference type="GO" id="GO:0048762">
    <property type="term" value="P:mesenchymal cell differentiation"/>
    <property type="evidence" value="ECO:0000266"/>
    <property type="project" value="RGD"/>
</dbReference>
<dbReference type="GO" id="GO:0010463">
    <property type="term" value="P:mesenchymal cell proliferation"/>
    <property type="evidence" value="ECO:0000266"/>
    <property type="project" value="RGD"/>
</dbReference>
<dbReference type="GO" id="GO:0030901">
    <property type="term" value="P:midbrain development"/>
    <property type="evidence" value="ECO:0000266"/>
    <property type="project" value="RGD"/>
</dbReference>
<dbReference type="GO" id="GO:0042474">
    <property type="term" value="P:middle ear morphogenesis"/>
    <property type="evidence" value="ECO:0000266"/>
    <property type="project" value="RGD"/>
</dbReference>
<dbReference type="GO" id="GO:0090272">
    <property type="term" value="P:negative regulation of fibroblast growth factor production"/>
    <property type="evidence" value="ECO:0000266"/>
    <property type="project" value="RGD"/>
</dbReference>
<dbReference type="GO" id="GO:0010629">
    <property type="term" value="P:negative regulation of gene expression"/>
    <property type="evidence" value="ECO:0000266"/>
    <property type="project" value="RGD"/>
</dbReference>
<dbReference type="GO" id="GO:0045668">
    <property type="term" value="P:negative regulation of osteoblast differentiation"/>
    <property type="evidence" value="ECO:0000315"/>
    <property type="project" value="RGD"/>
</dbReference>
<dbReference type="GO" id="GO:0000122">
    <property type="term" value="P:negative regulation of transcription by RNA polymerase II"/>
    <property type="evidence" value="ECO:0000266"/>
    <property type="project" value="RGD"/>
</dbReference>
<dbReference type="GO" id="GO:0031175">
    <property type="term" value="P:neuron projection development"/>
    <property type="evidence" value="ECO:0000314"/>
    <property type="project" value="RGD"/>
</dbReference>
<dbReference type="GO" id="GO:0021769">
    <property type="term" value="P:orbitofrontal cortex development"/>
    <property type="evidence" value="ECO:0000266"/>
    <property type="project" value="RGD"/>
</dbReference>
<dbReference type="GO" id="GO:0001759">
    <property type="term" value="P:organ induction"/>
    <property type="evidence" value="ECO:0000266"/>
    <property type="project" value="RGD"/>
</dbReference>
<dbReference type="GO" id="GO:0042473">
    <property type="term" value="P:outer ear morphogenesis"/>
    <property type="evidence" value="ECO:0000266"/>
    <property type="project" value="RGD"/>
</dbReference>
<dbReference type="GO" id="GO:0048339">
    <property type="term" value="P:paraxial mesoderm development"/>
    <property type="evidence" value="ECO:0000266"/>
    <property type="project" value="RGD"/>
</dbReference>
<dbReference type="GO" id="GO:0043536">
    <property type="term" value="P:positive regulation of blood vessel endothelial cell migration"/>
    <property type="evidence" value="ECO:0000266"/>
    <property type="project" value="RGD"/>
</dbReference>
<dbReference type="GO" id="GO:0060045">
    <property type="term" value="P:positive regulation of cardiac muscle cell proliferation"/>
    <property type="evidence" value="ECO:0000315"/>
    <property type="project" value="RGD"/>
</dbReference>
<dbReference type="GO" id="GO:0045787">
    <property type="term" value="P:positive regulation of cell cycle"/>
    <property type="evidence" value="ECO:0000266"/>
    <property type="project" value="RGD"/>
</dbReference>
<dbReference type="GO" id="GO:0045597">
    <property type="term" value="P:positive regulation of cell differentiation"/>
    <property type="evidence" value="ECO:0000318"/>
    <property type="project" value="GO_Central"/>
</dbReference>
<dbReference type="GO" id="GO:0008284">
    <property type="term" value="P:positive regulation of cell population proliferation"/>
    <property type="evidence" value="ECO:0000250"/>
    <property type="project" value="UniProtKB"/>
</dbReference>
<dbReference type="GO" id="GO:2001028">
    <property type="term" value="P:positive regulation of endothelial cell chemotaxis"/>
    <property type="evidence" value="ECO:0000266"/>
    <property type="project" value="RGD"/>
</dbReference>
<dbReference type="GO" id="GO:0010763">
    <property type="term" value="P:positive regulation of fibroblast migration"/>
    <property type="evidence" value="ECO:0000315"/>
    <property type="project" value="RGD"/>
</dbReference>
<dbReference type="GO" id="GO:2000491">
    <property type="term" value="P:positive regulation of hepatic stellate cell activation"/>
    <property type="evidence" value="ECO:0000315"/>
    <property type="project" value="RGD"/>
</dbReference>
<dbReference type="GO" id="GO:0043410">
    <property type="term" value="P:positive regulation of MAPK cascade"/>
    <property type="evidence" value="ECO:0000266"/>
    <property type="project" value="RGD"/>
</dbReference>
<dbReference type="GO" id="GO:0090080">
    <property type="term" value="P:positive regulation of MAPKKK cascade by fibroblast growth factor receptor signaling pathway"/>
    <property type="evidence" value="ECO:0000266"/>
    <property type="project" value="RGD"/>
</dbReference>
<dbReference type="GO" id="GO:0002053">
    <property type="term" value="P:positive regulation of mesenchymal cell proliferation"/>
    <property type="evidence" value="ECO:0000315"/>
    <property type="project" value="RGD"/>
</dbReference>
<dbReference type="GO" id="GO:1903465">
    <property type="term" value="P:positive regulation of mitotic cell cycle DNA replication"/>
    <property type="evidence" value="ECO:0000266"/>
    <property type="project" value="RGD"/>
</dbReference>
<dbReference type="GO" id="GO:0045666">
    <property type="term" value="P:positive regulation of neuron differentiation"/>
    <property type="evidence" value="ECO:0000250"/>
    <property type="project" value="UniProtKB"/>
</dbReference>
<dbReference type="GO" id="GO:0010976">
    <property type="term" value="P:positive regulation of neuron projection development"/>
    <property type="evidence" value="ECO:0000314"/>
    <property type="project" value="RGD"/>
</dbReference>
<dbReference type="GO" id="GO:2000830">
    <property type="term" value="P:positive regulation of parathyroid hormone secretion"/>
    <property type="evidence" value="ECO:0000266"/>
    <property type="project" value="RGD"/>
</dbReference>
<dbReference type="GO" id="GO:0051897">
    <property type="term" value="P:positive regulation of phosphatidylinositol 3-kinase/protein kinase B signal transduction"/>
    <property type="evidence" value="ECO:0000266"/>
    <property type="project" value="RGD"/>
</dbReference>
<dbReference type="GO" id="GO:2000648">
    <property type="term" value="P:positive regulation of stem cell proliferation"/>
    <property type="evidence" value="ECO:0000266"/>
    <property type="project" value="RGD"/>
</dbReference>
<dbReference type="GO" id="GO:0045944">
    <property type="term" value="P:positive regulation of transcription by RNA polymerase II"/>
    <property type="evidence" value="ECO:0000315"/>
    <property type="project" value="BHF-UCL"/>
</dbReference>
<dbReference type="GO" id="GO:1905564">
    <property type="term" value="P:positive regulation of vascular endothelial cell proliferation"/>
    <property type="evidence" value="ECO:0000266"/>
    <property type="project" value="RGD"/>
</dbReference>
<dbReference type="GO" id="GO:0021827">
    <property type="term" value="P:postnatal olfactory bulb interneuron migration"/>
    <property type="evidence" value="ECO:0000315"/>
    <property type="project" value="RGD"/>
</dbReference>
<dbReference type="GO" id="GO:0046777">
    <property type="term" value="P:protein autophosphorylation"/>
    <property type="evidence" value="ECO:0000250"/>
    <property type="project" value="UniProtKB"/>
</dbReference>
<dbReference type="GO" id="GO:0060665">
    <property type="term" value="P:regulation of branching involved in salivary gland morphogenesis by mesenchymal-epithelial signaling"/>
    <property type="evidence" value="ECO:0000266"/>
    <property type="project" value="RGD"/>
</dbReference>
<dbReference type="GO" id="GO:0042127">
    <property type="term" value="P:regulation of cell population proliferation"/>
    <property type="evidence" value="ECO:0000314"/>
    <property type="project" value="RGD"/>
</dbReference>
<dbReference type="GO" id="GO:0050678">
    <property type="term" value="P:regulation of epithelial cell proliferation"/>
    <property type="evidence" value="ECO:0000266"/>
    <property type="project" value="RGD"/>
</dbReference>
<dbReference type="GO" id="GO:2001239">
    <property type="term" value="P:regulation of extrinsic apoptotic signaling pathway in absence of ligand"/>
    <property type="evidence" value="ECO:0000266"/>
    <property type="project" value="RGD"/>
</dbReference>
<dbReference type="GO" id="GO:0010468">
    <property type="term" value="P:regulation of gene expression"/>
    <property type="evidence" value="ECO:0000266"/>
    <property type="project" value="RGD"/>
</dbReference>
<dbReference type="GO" id="GO:0048378">
    <property type="term" value="P:regulation of lateral mesodermal cell fate specification"/>
    <property type="evidence" value="ECO:0000266"/>
    <property type="project" value="RGD"/>
</dbReference>
<dbReference type="GO" id="GO:0010966">
    <property type="term" value="P:regulation of phosphate transport"/>
    <property type="evidence" value="ECO:0000266"/>
    <property type="project" value="RGD"/>
</dbReference>
<dbReference type="GO" id="GO:0051174">
    <property type="term" value="P:regulation of phosphorus metabolic process"/>
    <property type="evidence" value="ECO:0000266"/>
    <property type="project" value="RGD"/>
</dbReference>
<dbReference type="GO" id="GO:0099151">
    <property type="term" value="P:regulation of postsynaptic density assembly"/>
    <property type="evidence" value="ECO:0000266"/>
    <property type="project" value="RGD"/>
</dbReference>
<dbReference type="GO" id="GO:0072091">
    <property type="term" value="P:regulation of stem cell proliferation"/>
    <property type="evidence" value="ECO:0000315"/>
    <property type="project" value="RGD"/>
</dbReference>
<dbReference type="GO" id="GO:0002931">
    <property type="term" value="P:response to ischemia"/>
    <property type="evidence" value="ECO:0000270"/>
    <property type="project" value="RGD"/>
</dbReference>
<dbReference type="GO" id="GO:0031667">
    <property type="term" value="P:response to nutrient levels"/>
    <property type="evidence" value="ECO:0000270"/>
    <property type="project" value="RGD"/>
</dbReference>
<dbReference type="GO" id="GO:1904383">
    <property type="term" value="P:response to sodium phosphate"/>
    <property type="evidence" value="ECO:0000266"/>
    <property type="project" value="RGD"/>
</dbReference>
<dbReference type="GO" id="GO:0007435">
    <property type="term" value="P:salivary gland morphogenesis"/>
    <property type="evidence" value="ECO:0000266"/>
    <property type="project" value="RGD"/>
</dbReference>
<dbReference type="GO" id="GO:0007605">
    <property type="term" value="P:sensory perception of sound"/>
    <property type="evidence" value="ECO:0000266"/>
    <property type="project" value="RGD"/>
</dbReference>
<dbReference type="GO" id="GO:0048863">
    <property type="term" value="P:stem cell differentiation"/>
    <property type="evidence" value="ECO:0000266"/>
    <property type="project" value="RGD"/>
</dbReference>
<dbReference type="GO" id="GO:0019827">
    <property type="term" value="P:stem cell population maintenance"/>
    <property type="evidence" value="ECO:0000315"/>
    <property type="project" value="RGD"/>
</dbReference>
<dbReference type="GO" id="GO:0072089">
    <property type="term" value="P:stem cell proliferation"/>
    <property type="evidence" value="ECO:0000266"/>
    <property type="project" value="RGD"/>
</dbReference>
<dbReference type="GO" id="GO:0022028">
    <property type="term" value="P:tangential migration from the subventricular zone to the olfactory bulb"/>
    <property type="evidence" value="ECO:0000315"/>
    <property type="project" value="RGD"/>
</dbReference>
<dbReference type="GO" id="GO:0001657">
    <property type="term" value="P:ureteric bud development"/>
    <property type="evidence" value="ECO:0000266"/>
    <property type="project" value="RGD"/>
</dbReference>
<dbReference type="GO" id="GO:0021847">
    <property type="term" value="P:ventricular zone neuroblast division"/>
    <property type="evidence" value="ECO:0000266"/>
    <property type="project" value="RGD"/>
</dbReference>
<dbReference type="GO" id="GO:0070640">
    <property type="term" value="P:vitamin D3 metabolic process"/>
    <property type="evidence" value="ECO:0000266"/>
    <property type="project" value="RGD"/>
</dbReference>
<dbReference type="CDD" id="cd04973">
    <property type="entry name" value="IgI_1_FGFR"/>
    <property type="match status" value="1"/>
</dbReference>
<dbReference type="CDD" id="cd05857">
    <property type="entry name" value="IgI_2_FGFR"/>
    <property type="match status" value="1"/>
</dbReference>
<dbReference type="CDD" id="cd05098">
    <property type="entry name" value="PTKc_FGFR1"/>
    <property type="match status" value="1"/>
</dbReference>
<dbReference type="FunFam" id="1.10.510.10:FF:000007">
    <property type="entry name" value="Fibroblast growth factor receptor"/>
    <property type="match status" value="1"/>
</dbReference>
<dbReference type="FunFam" id="2.60.40.10:FF:000016">
    <property type="entry name" value="Fibroblast growth factor receptor"/>
    <property type="match status" value="1"/>
</dbReference>
<dbReference type="FunFam" id="2.60.40.10:FF:000020">
    <property type="entry name" value="Fibroblast growth factor receptor"/>
    <property type="match status" value="1"/>
</dbReference>
<dbReference type="FunFam" id="2.60.40.10:FF:000408">
    <property type="entry name" value="Fibroblast growth factor receptor"/>
    <property type="match status" value="1"/>
</dbReference>
<dbReference type="FunFam" id="3.30.200.20:FF:000011">
    <property type="entry name" value="Fibroblast growth factor receptor"/>
    <property type="match status" value="1"/>
</dbReference>
<dbReference type="Gene3D" id="2.60.40.10">
    <property type="entry name" value="Immunoglobulins"/>
    <property type="match status" value="3"/>
</dbReference>
<dbReference type="Gene3D" id="3.30.200.20">
    <property type="entry name" value="Phosphorylase Kinase, domain 1"/>
    <property type="match status" value="1"/>
</dbReference>
<dbReference type="Gene3D" id="1.10.510.10">
    <property type="entry name" value="Transferase(Phosphotransferase) domain 1"/>
    <property type="match status" value="1"/>
</dbReference>
<dbReference type="InterPro" id="IPR028174">
    <property type="entry name" value="FGF_rcpt_1"/>
</dbReference>
<dbReference type="InterPro" id="IPR016248">
    <property type="entry name" value="FGF_rcpt_fam"/>
</dbReference>
<dbReference type="InterPro" id="IPR007110">
    <property type="entry name" value="Ig-like_dom"/>
</dbReference>
<dbReference type="InterPro" id="IPR036179">
    <property type="entry name" value="Ig-like_dom_sf"/>
</dbReference>
<dbReference type="InterPro" id="IPR013783">
    <property type="entry name" value="Ig-like_fold"/>
</dbReference>
<dbReference type="InterPro" id="IPR013098">
    <property type="entry name" value="Ig_I-set"/>
</dbReference>
<dbReference type="InterPro" id="IPR003599">
    <property type="entry name" value="Ig_sub"/>
</dbReference>
<dbReference type="InterPro" id="IPR003598">
    <property type="entry name" value="Ig_sub2"/>
</dbReference>
<dbReference type="InterPro" id="IPR013151">
    <property type="entry name" value="Immunoglobulin_dom"/>
</dbReference>
<dbReference type="InterPro" id="IPR011009">
    <property type="entry name" value="Kinase-like_dom_sf"/>
</dbReference>
<dbReference type="InterPro" id="IPR000719">
    <property type="entry name" value="Prot_kinase_dom"/>
</dbReference>
<dbReference type="InterPro" id="IPR017441">
    <property type="entry name" value="Protein_kinase_ATP_BS"/>
</dbReference>
<dbReference type="InterPro" id="IPR050122">
    <property type="entry name" value="RTK"/>
</dbReference>
<dbReference type="InterPro" id="IPR001245">
    <property type="entry name" value="Ser-Thr/Tyr_kinase_cat_dom"/>
</dbReference>
<dbReference type="InterPro" id="IPR008266">
    <property type="entry name" value="Tyr_kinase_AS"/>
</dbReference>
<dbReference type="InterPro" id="IPR020635">
    <property type="entry name" value="Tyr_kinase_cat_dom"/>
</dbReference>
<dbReference type="PANTHER" id="PTHR24416:SF131">
    <property type="entry name" value="FIBROBLAST GROWTH FACTOR RECEPTOR 1"/>
    <property type="match status" value="1"/>
</dbReference>
<dbReference type="PANTHER" id="PTHR24416">
    <property type="entry name" value="TYROSINE-PROTEIN KINASE RECEPTOR"/>
    <property type="match status" value="1"/>
</dbReference>
<dbReference type="Pfam" id="PF07679">
    <property type="entry name" value="I-set"/>
    <property type="match status" value="2"/>
</dbReference>
<dbReference type="Pfam" id="PF00047">
    <property type="entry name" value="ig"/>
    <property type="match status" value="1"/>
</dbReference>
<dbReference type="Pfam" id="PF07714">
    <property type="entry name" value="PK_Tyr_Ser-Thr"/>
    <property type="match status" value="1"/>
</dbReference>
<dbReference type="PIRSF" id="PIRSF000628">
    <property type="entry name" value="FGFR"/>
    <property type="match status" value="1"/>
</dbReference>
<dbReference type="PRINTS" id="PR00109">
    <property type="entry name" value="TYRKINASE"/>
</dbReference>
<dbReference type="SMART" id="SM00409">
    <property type="entry name" value="IG"/>
    <property type="match status" value="3"/>
</dbReference>
<dbReference type="SMART" id="SM00408">
    <property type="entry name" value="IGc2"/>
    <property type="match status" value="3"/>
</dbReference>
<dbReference type="SMART" id="SM00219">
    <property type="entry name" value="TyrKc"/>
    <property type="match status" value="1"/>
</dbReference>
<dbReference type="SUPFAM" id="SSF48726">
    <property type="entry name" value="Immunoglobulin"/>
    <property type="match status" value="3"/>
</dbReference>
<dbReference type="SUPFAM" id="SSF56112">
    <property type="entry name" value="Protein kinase-like (PK-like)"/>
    <property type="match status" value="1"/>
</dbReference>
<dbReference type="PROSITE" id="PS50835">
    <property type="entry name" value="IG_LIKE"/>
    <property type="match status" value="3"/>
</dbReference>
<dbReference type="PROSITE" id="PS00107">
    <property type="entry name" value="PROTEIN_KINASE_ATP"/>
    <property type="match status" value="1"/>
</dbReference>
<dbReference type="PROSITE" id="PS50011">
    <property type="entry name" value="PROTEIN_KINASE_DOM"/>
    <property type="match status" value="1"/>
</dbReference>
<dbReference type="PROSITE" id="PS00109">
    <property type="entry name" value="PROTEIN_KINASE_TYR"/>
    <property type="match status" value="1"/>
</dbReference>
<proteinExistence type="evidence at protein level"/>
<name>FGFR1_RAT</name>
<organism>
    <name type="scientific">Rattus norvegicus</name>
    <name type="common">Rat</name>
    <dbReference type="NCBI Taxonomy" id="10116"/>
    <lineage>
        <taxon>Eukaryota</taxon>
        <taxon>Metazoa</taxon>
        <taxon>Chordata</taxon>
        <taxon>Craniata</taxon>
        <taxon>Vertebrata</taxon>
        <taxon>Euteleostomi</taxon>
        <taxon>Mammalia</taxon>
        <taxon>Eutheria</taxon>
        <taxon>Euarchontoglires</taxon>
        <taxon>Glires</taxon>
        <taxon>Rodentia</taxon>
        <taxon>Myomorpha</taxon>
        <taxon>Muroidea</taxon>
        <taxon>Muridae</taxon>
        <taxon>Murinae</taxon>
        <taxon>Rattus</taxon>
    </lineage>
</organism>
<keyword id="KW-0067">ATP-binding</keyword>
<keyword id="KW-1003">Cell membrane</keyword>
<keyword id="KW-0963">Cytoplasm</keyword>
<keyword id="KW-0968">Cytoplasmic vesicle</keyword>
<keyword id="KW-1015">Disulfide bond</keyword>
<keyword id="KW-0325">Glycoprotein</keyword>
<keyword id="KW-0358">Heparin-binding</keyword>
<keyword id="KW-0393">Immunoglobulin domain</keyword>
<keyword id="KW-0418">Kinase</keyword>
<keyword id="KW-0472">Membrane</keyword>
<keyword id="KW-0547">Nucleotide-binding</keyword>
<keyword id="KW-0539">Nucleus</keyword>
<keyword id="KW-0597">Phosphoprotein</keyword>
<keyword id="KW-0675">Receptor</keyword>
<keyword id="KW-1185">Reference proteome</keyword>
<keyword id="KW-0677">Repeat</keyword>
<keyword id="KW-0732">Signal</keyword>
<keyword id="KW-0808">Transferase</keyword>
<keyword id="KW-0812">Transmembrane</keyword>
<keyword id="KW-1133">Transmembrane helix</keyword>
<keyword id="KW-0829">Tyrosine-protein kinase</keyword>
<keyword id="KW-0832">Ubl conjugation</keyword>
<protein>
    <recommendedName>
        <fullName>Fibroblast growth factor receptor 1</fullName>
        <shortName>FGFR-1</shortName>
        <shortName>bFGF-R-1</shortName>
        <ecNumber evidence="2">2.7.10.1</ecNumber>
    </recommendedName>
    <alternativeName>
        <fullName>Basic fibroblast growth factor receptor 1</fullName>
    </alternativeName>
    <alternativeName>
        <fullName>MFR</fullName>
    </alternativeName>
    <alternativeName>
        <fullName>Proto-oncogene c-Fgr</fullName>
    </alternativeName>
    <cdAntigenName>CD331</cdAntigenName>
</protein>
<accession>Q04589</accession>
<evidence type="ECO:0000250" key="1"/>
<evidence type="ECO:0000250" key="2">
    <source>
        <dbReference type="UniProtKB" id="P11362"/>
    </source>
</evidence>
<evidence type="ECO:0000250" key="3">
    <source>
        <dbReference type="UniProtKB" id="P16092"/>
    </source>
</evidence>
<evidence type="ECO:0000255" key="4"/>
<evidence type="ECO:0000255" key="5">
    <source>
        <dbReference type="PROSITE-ProRule" id="PRU00114"/>
    </source>
</evidence>
<evidence type="ECO:0000255" key="6">
    <source>
        <dbReference type="PROSITE-ProRule" id="PRU00159"/>
    </source>
</evidence>
<evidence type="ECO:0000255" key="7">
    <source>
        <dbReference type="PROSITE-ProRule" id="PRU10028"/>
    </source>
</evidence>
<evidence type="ECO:0000256" key="8">
    <source>
        <dbReference type="SAM" id="MobiDB-lite"/>
    </source>
</evidence>
<evidence type="ECO:0000269" key="9">
    <source>
    </source>
</evidence>
<evidence type="ECO:0000269" key="10">
    <source>
    </source>
</evidence>
<sequence length="822" mass="91825">MWGWRGLLFWAVLVTATLCTARPAPTLPEQAQPWGVPVEVESLLVHPGDLLQLRCRLRDDVQSINWLRDGVQLAESNRTRITGEEVEVRDSIPADSGLYACVTNSPSGSDTTYFSVNVSDALPSSEDDDDDDDSSSEEKETDNTKPNRRPVAPYWTSPEKMEKKLHAVPAAKTVKFKCPSSGTPSPTLRWLKNGKEFKPDHRIGGYKVRYATWSIIMDSVVPSDKGNYTCIVENEYGSINHTYQLDVVERSPHRPILQAGLPANKTVALGSNVEFMCKVYSDPQPHIQWLKHIEVNGSKIGPDNLPYDQILKTAGVNTTDKEMEVLHLRNVSFEDAGEYTCLAGNSIGLSHHSAWLTVLEALEERPAVMTSPLYLEIIIYCTGAFLISCMVGSVIIYKMKSGTKKSDFHSQMAVHKLAKSIPLRRQVTVSADSSASMNSGVLLVRPSRLSSSGTPMLAGVSEYELPEDPRWELPRDRLVLGKPLGEGCFGQVVLAEAIGLDKDKPNRVTKVAVKMLKSDATEKDLSDLISEMEMMKMIGKHKNIINLLGACTQDGPLYVIVEYASKGNLREYLQARRPPGLEYCYNPSHNPEEQLSSKDLVSCAYQVARGMEYLASKKCIHRDLAARNVLVTEDNVMKIADFGLARDIHHIDYYKKTTNGRLPVKWMAPEALFDRIYTHQSDVWSFGVLLWEIFTLGGSPNPGVPVEELFKLLKEGHRMDKPSNCTNELYMMMRDCWNAVPSQRPTFKQLVEDLDRIVALTSNQEYLDLSMPLDQDSPSFPDTRSSTCSSGEDSVFSHEPFPEEPCLPRHPTQLANGGLNRR</sequence>
<comment type="function">
    <text evidence="2 3">Tyrosine-protein kinase that acts as a cell-surface receptor for fibroblast growth factors and plays an essential role in the regulation of embryonic development, cell proliferation, differentiation and migration. Required for normal mesoderm patterning and correct axial organization during embryonic development, normal skeletogenesis and normal development of the gonadotropin-releasing hormone (GnRH) neuronal system. Phosphorylates PLCG1, FRS2, GAB1 and SHB. Ligand binding leads to the activation of several signaling cascades. Activation of PLCG1 leads to the production of the cellular signaling molecules diacylglycerol and inositol 1,4,5-trisphosphate. Phosphorylation of FRS2 triggers recruitment of GRB2, GAB1, PIK3R1 and SOS1, and mediates activation of RAS, MAPK1/ERK2, MAPK3/ERK1 and the MAP kinase signaling pathway, as well as of the AKT1 signaling pathway. Promotes phosphorylation of SHC1, STAT1 and PTPN11/SHP2. In the nucleus, enhances RPS6KA1 and CREB1 activity and contributes to the regulation of transcription. FGFR1 signaling is down-regulated by IL17RD/SEF, and by FGFR1 ubiquitination, internalization and degradation (By similarity).</text>
</comment>
<comment type="catalytic activity">
    <reaction evidence="2 7">
        <text>L-tyrosyl-[protein] + ATP = O-phospho-L-tyrosyl-[protein] + ADP + H(+)</text>
        <dbReference type="Rhea" id="RHEA:10596"/>
        <dbReference type="Rhea" id="RHEA-COMP:10136"/>
        <dbReference type="Rhea" id="RHEA-COMP:20101"/>
        <dbReference type="ChEBI" id="CHEBI:15378"/>
        <dbReference type="ChEBI" id="CHEBI:30616"/>
        <dbReference type="ChEBI" id="CHEBI:46858"/>
        <dbReference type="ChEBI" id="CHEBI:61978"/>
        <dbReference type="ChEBI" id="CHEBI:456216"/>
        <dbReference type="EC" id="2.7.10.1"/>
    </reaction>
</comment>
<comment type="activity regulation">
    <text evidence="2">Present in an inactive conformation in the absence of bound ligand. Ligand binding leads to dimerization and activation by sequential autophosphorylation on tyrosine residues (By similarity).</text>
</comment>
<comment type="subunit">
    <text evidence="2 3 9">Monomer. Homodimer after ligand binding. Interacts predominantly with FGF1 and FGF2, but can also interact with FGF3, FGF4, FGF5, FGF6, FGF8, FGF10, FGF19, FGF21, FGF22 and FGF23 (in vitro). Ligand specificity is determined by tissue-specific expression of isoforms, and differences in the third Ig-like domain are crucial for ligand specificity. Affinity for fibroblast growth factors (FGFs) is increased by heparan sulfate glycosaminoglycans that function as coreceptors. Likewise, KLB increases the affinity for FGF19, FGF21 and FGF23. Interacts (phosphorylated on Tyr-766) with PLCG1 (via SH2 domains). Interacts with FRS2. Interacts (via C-terminus) with NEDD4 (via WW3 domain). Interacts with RPS6KA1 (PubMed:15117958). Interacts with KL (By similarity). Interacts with SHB (via SH2 domain) and GRB10. Interacts with ANOS1; this interaction does not interfere with FGF2-binding to FGFR1, but prevents binding of heparin-bound FGF2. Interacts with SOX2 and SOX3 (By similarity). Interacts with FLRT1, FLRT2 and FLRT3. Found in a ternary complex with FGF1 and ITGAV:ITGB3 (By similarity).</text>
</comment>
<comment type="interaction">
    <interactant intactId="EBI-2480918">
        <id>Q04589</id>
    </interactant>
    <interactant intactId="EBI-6570156">
        <id>P19327</id>
        <label>Htr1a</label>
    </interactant>
    <organismsDiffer>false</organismsDiffer>
    <experiments>5</experiments>
</comment>
<comment type="interaction">
    <interactant intactId="EBI-2480918">
        <id>Q04589</id>
    </interactant>
    <interactant intactId="EBI-520788">
        <id>P10686</id>
        <label>Plcg1</label>
    </interactant>
    <organismsDiffer>false</organismsDiffer>
    <experiments>2</experiments>
</comment>
<comment type="subcellular location">
    <subcellularLocation>
        <location evidence="9">Cell membrane</location>
        <topology evidence="9">Single-pass type I membrane protein</topology>
    </subcellularLocation>
    <subcellularLocation>
        <location evidence="9">Nucleus</location>
    </subcellularLocation>
    <subcellularLocation>
        <location evidence="9">Cytoplasm</location>
        <location evidence="9">Cytosol</location>
    </subcellularLocation>
    <subcellularLocation>
        <location evidence="1">Cytoplasmic vesicle</location>
    </subcellularLocation>
    <text evidence="1">After ligand binding, both receptor and ligand are rapidly internalized. Can translocate to the nucleus after internalization, or by translocation from the endoplasmic reticulum or Golgi apparatus to the cytosol, and from there to the nucleus (By similarity).</text>
</comment>
<comment type="tissue specificity">
    <text evidence="10">Expressed in the parathyroid.</text>
</comment>
<comment type="domain">
    <text evidence="1">The second and third Ig-like domains directly interact with fibroblast growth factors (FGF) and heparan sulfate proteoglycans. Isoforms lacking the first Ig-like domain have higher affinity for fibroblast growth factors (FGF) and heparan sulfate proteoglycans than isoforms with all three Ig-like domains (By similarity).</text>
</comment>
<comment type="PTM">
    <text evidence="2">Autophosphorylated. Binding of FGF family members together with heparan sulfate proteoglycan or heparin promotes receptor dimerization and autophosphorylation on tyrosine residues. Autophosphorylation occurs in trans between the two FGFR molecules present in the dimer and proceeds in a highly ordered manner. Initial autophosphorylation at Tyr-653 increases the kinase activity by a factor of 50 to 100. After this, Tyr-583 becomes phosphorylated, followed by phosphorylation of Tyr-463, Tyr-766, Tyr-583 and Tyr-585. In a third stage, Tyr-654 is autophosphorylated, resulting in a further tenfold increase of kinase activity. Phosphotyrosine residues provide docking sites for interacting proteins and so are crucial for FGFR1 function and its regulation (By similarity).</text>
</comment>
<comment type="PTM">
    <text evidence="2">Ubiquitinated. FGFR1 is rapidly ubiquitinated by NEDD4 after autophosphorylation, leading to internalization and lysosomal degradation. CBL is recruited to activated FGFR1 via FRS2 and GRB2, and mediates ubiquitination and subsequent degradation of FGFR1 (By similarity).</text>
</comment>
<comment type="PTM">
    <text evidence="2">N-glycosylated in the endoplasmic reticulum. The N-glycan chains undergo further maturation to an Endo H-resistant form in the Golgi apparatus (By similarity).</text>
</comment>
<comment type="similarity">
    <text evidence="6">Belongs to the protein kinase superfamily. Tyr protein kinase family. Fibroblast growth factor receptor subfamily.</text>
</comment>